<protein>
    <recommendedName>
        <fullName>Dihydrolipoyl dehydrogenase</fullName>
        <ecNumber>1.8.1.4</ecNumber>
    </recommendedName>
    <alternativeName>
        <fullName>Dihydrolipoamide dehydrogenase</fullName>
    </alternativeName>
    <alternativeName>
        <fullName>E3 component of alpha-ketoacid dehydrogenase complexes</fullName>
    </alternativeName>
</protein>
<name>DLDH_MYCLE</name>
<sequence>MTHYDVVVLGAGPGGYVAAIRAAQLGLSTAVVEPKYWGGICLNVGCIPSKVLLHNAELAHIFTKEAKTFGISGDASFDYGIAYDRSRKVSEGRVAGVHFLMKKNKITEIHGYGRFTDANTLSVELSEGVPETPLKVTFNNVIIATGSKTRLVPGTLLSTNVITYEEQILTRELPDSIVIVGAGAIGIEFGYVLKNYGVDVTIVEFLPRAMPNEDAEVSKEIEKQFKKMGIKILTGTKVESISDNGSHVLVAVSKDGQFQELKADKVLQAIGFAPNVDGYGLDKVGVALTADKAVDIDDYMQTNVSHIYAIGDVTGKLQLAHVAEAQGVVAAEAIAGAETLALSDYRMMPRATFCQPNVASFGLTEQQARDGGYDVVVAKFPFTANAKAHGMGDPSGFVKLVADAKYGELLGGHMIGHNVSELLPELTLAQKWDLTATELVRNVHTHPTLSEALQECFHGLIGHMINF</sequence>
<proteinExistence type="inferred from homology"/>
<organism>
    <name type="scientific">Mycobacterium leprae (strain TN)</name>
    <dbReference type="NCBI Taxonomy" id="272631"/>
    <lineage>
        <taxon>Bacteria</taxon>
        <taxon>Bacillati</taxon>
        <taxon>Actinomycetota</taxon>
        <taxon>Actinomycetes</taxon>
        <taxon>Mycobacteriales</taxon>
        <taxon>Mycobacteriaceae</taxon>
        <taxon>Mycobacterium</taxon>
    </lineage>
</organism>
<evidence type="ECO:0000250" key="1"/>
<evidence type="ECO:0000305" key="2"/>
<reference key="1">
    <citation type="submission" date="1994-09" db="EMBL/GenBank/DDBJ databases">
        <authorList>
            <person name="Smith D.R."/>
            <person name="Robison K."/>
        </authorList>
    </citation>
    <scope>NUCLEOTIDE SEQUENCE [GENOMIC DNA]</scope>
</reference>
<reference key="2">
    <citation type="journal article" date="2001" name="Nature">
        <title>Massive gene decay in the leprosy bacillus.</title>
        <authorList>
            <person name="Cole S.T."/>
            <person name="Eiglmeier K."/>
            <person name="Parkhill J."/>
            <person name="James K.D."/>
            <person name="Thomson N.R."/>
            <person name="Wheeler P.R."/>
            <person name="Honore N."/>
            <person name="Garnier T."/>
            <person name="Churcher C.M."/>
            <person name="Harris D.E."/>
            <person name="Mungall K.L."/>
            <person name="Basham D."/>
            <person name="Brown D."/>
            <person name="Chillingworth T."/>
            <person name="Connor R."/>
            <person name="Davies R.M."/>
            <person name="Devlin K."/>
            <person name="Duthoy S."/>
            <person name="Feltwell T."/>
            <person name="Fraser A."/>
            <person name="Hamlin N."/>
            <person name="Holroyd S."/>
            <person name="Hornsby T."/>
            <person name="Jagels K."/>
            <person name="Lacroix C."/>
            <person name="Maclean J."/>
            <person name="Moule S."/>
            <person name="Murphy L.D."/>
            <person name="Oliver K."/>
            <person name="Quail M.A."/>
            <person name="Rajandream M.A."/>
            <person name="Rutherford K.M."/>
            <person name="Rutter S."/>
            <person name="Seeger K."/>
            <person name="Simon S."/>
            <person name="Simmonds M."/>
            <person name="Skelton J."/>
            <person name="Squares R."/>
            <person name="Squares S."/>
            <person name="Stevens K."/>
            <person name="Taylor K."/>
            <person name="Whitehead S."/>
            <person name="Woodward J.R."/>
            <person name="Barrell B.G."/>
        </authorList>
    </citation>
    <scope>NUCLEOTIDE SEQUENCE [LARGE SCALE GENOMIC DNA]</scope>
    <source>
        <strain>TN</strain>
    </source>
</reference>
<keyword id="KW-0963">Cytoplasm</keyword>
<keyword id="KW-1015">Disulfide bond</keyword>
<keyword id="KW-0274">FAD</keyword>
<keyword id="KW-0285">Flavoprotein</keyword>
<keyword id="KW-0520">NAD</keyword>
<keyword id="KW-0560">Oxidoreductase</keyword>
<keyword id="KW-0676">Redox-active center</keyword>
<keyword id="KW-1185">Reference proteome</keyword>
<accession>Q50068</accession>
<dbReference type="EC" id="1.8.1.4"/>
<dbReference type="EMBL" id="U15183">
    <property type="protein sequence ID" value="AAA63016.1"/>
    <property type="molecule type" value="Genomic_DNA"/>
</dbReference>
<dbReference type="EMBL" id="AL583925">
    <property type="protein sequence ID" value="CAC31903.1"/>
    <property type="molecule type" value="Genomic_DNA"/>
</dbReference>
<dbReference type="PIR" id="G87207">
    <property type="entry name" value="G87207"/>
</dbReference>
<dbReference type="RefSeq" id="NP_302544.1">
    <property type="nucleotide sequence ID" value="NC_002677.1"/>
</dbReference>
<dbReference type="SMR" id="Q50068"/>
<dbReference type="STRING" id="272631.gene:17576249"/>
<dbReference type="KEGG" id="mle:ML2387"/>
<dbReference type="PATRIC" id="fig|272631.5.peg.4593"/>
<dbReference type="Leproma" id="ML2387"/>
<dbReference type="eggNOG" id="COG1249">
    <property type="taxonomic scope" value="Bacteria"/>
</dbReference>
<dbReference type="HOGENOM" id="CLU_016755_0_2_11"/>
<dbReference type="OrthoDB" id="9800167at2"/>
<dbReference type="Proteomes" id="UP000000806">
    <property type="component" value="Chromosome"/>
</dbReference>
<dbReference type="GO" id="GO:0005737">
    <property type="term" value="C:cytoplasm"/>
    <property type="evidence" value="ECO:0007669"/>
    <property type="project" value="UniProtKB-SubCell"/>
</dbReference>
<dbReference type="GO" id="GO:0004148">
    <property type="term" value="F:dihydrolipoyl dehydrogenase (NADH) activity"/>
    <property type="evidence" value="ECO:0007669"/>
    <property type="project" value="UniProtKB-EC"/>
</dbReference>
<dbReference type="GO" id="GO:0050660">
    <property type="term" value="F:flavin adenine dinucleotide binding"/>
    <property type="evidence" value="ECO:0007669"/>
    <property type="project" value="InterPro"/>
</dbReference>
<dbReference type="GO" id="GO:0006103">
    <property type="term" value="P:2-oxoglutarate metabolic process"/>
    <property type="evidence" value="ECO:0007669"/>
    <property type="project" value="TreeGrafter"/>
</dbReference>
<dbReference type="FunFam" id="3.30.390.30:FF:000001">
    <property type="entry name" value="Dihydrolipoyl dehydrogenase"/>
    <property type="match status" value="1"/>
</dbReference>
<dbReference type="Gene3D" id="3.30.390.30">
    <property type="match status" value="1"/>
</dbReference>
<dbReference type="Gene3D" id="3.50.50.60">
    <property type="entry name" value="FAD/NAD(P)-binding domain"/>
    <property type="match status" value="2"/>
</dbReference>
<dbReference type="InterPro" id="IPR050151">
    <property type="entry name" value="Class-I_Pyr_Nuc-Dis_Oxidored"/>
</dbReference>
<dbReference type="InterPro" id="IPR036188">
    <property type="entry name" value="FAD/NAD-bd_sf"/>
</dbReference>
<dbReference type="InterPro" id="IPR023753">
    <property type="entry name" value="FAD/NAD-binding_dom"/>
</dbReference>
<dbReference type="InterPro" id="IPR016156">
    <property type="entry name" value="FAD/NAD-linked_Rdtase_dimer_sf"/>
</dbReference>
<dbReference type="InterPro" id="IPR006258">
    <property type="entry name" value="Lipoamide_DH"/>
</dbReference>
<dbReference type="InterPro" id="IPR001100">
    <property type="entry name" value="Pyr_nuc-diS_OxRdtase"/>
</dbReference>
<dbReference type="InterPro" id="IPR004099">
    <property type="entry name" value="Pyr_nucl-diS_OxRdtase_dimer"/>
</dbReference>
<dbReference type="InterPro" id="IPR012999">
    <property type="entry name" value="Pyr_OxRdtase_I_AS"/>
</dbReference>
<dbReference type="NCBIfam" id="TIGR01350">
    <property type="entry name" value="lipoamide_DH"/>
    <property type="match status" value="1"/>
</dbReference>
<dbReference type="PANTHER" id="PTHR22912:SF217">
    <property type="entry name" value="DIHYDROLIPOYL DEHYDROGENASE"/>
    <property type="match status" value="1"/>
</dbReference>
<dbReference type="PANTHER" id="PTHR22912">
    <property type="entry name" value="DISULFIDE OXIDOREDUCTASE"/>
    <property type="match status" value="1"/>
</dbReference>
<dbReference type="Pfam" id="PF07992">
    <property type="entry name" value="Pyr_redox_2"/>
    <property type="match status" value="1"/>
</dbReference>
<dbReference type="Pfam" id="PF02852">
    <property type="entry name" value="Pyr_redox_dim"/>
    <property type="match status" value="1"/>
</dbReference>
<dbReference type="PIRSF" id="PIRSF000350">
    <property type="entry name" value="Mercury_reductase_MerA"/>
    <property type="match status" value="1"/>
</dbReference>
<dbReference type="PRINTS" id="PR00368">
    <property type="entry name" value="FADPNR"/>
</dbReference>
<dbReference type="PRINTS" id="PR00411">
    <property type="entry name" value="PNDRDTASEI"/>
</dbReference>
<dbReference type="SUPFAM" id="SSF51905">
    <property type="entry name" value="FAD/NAD(P)-binding domain"/>
    <property type="match status" value="1"/>
</dbReference>
<dbReference type="SUPFAM" id="SSF55424">
    <property type="entry name" value="FAD/NAD-linked reductases, dimerisation (C-terminal) domain"/>
    <property type="match status" value="1"/>
</dbReference>
<dbReference type="PROSITE" id="PS00076">
    <property type="entry name" value="PYRIDINE_REDOX_1"/>
    <property type="match status" value="1"/>
</dbReference>
<gene>
    <name type="primary">lpd</name>
    <name type="ordered locus">ML2387</name>
    <name type="ORF">u1740l</name>
</gene>
<comment type="function">
    <text evidence="1">Lipoamide dehydrogenase is a component of the alpha-ketoacid dehydrogenase complexes. Catalyzes the reoxidation of dihydrolipoyl groups which are covalently attached to the lipoate acyltransferase components (E2) of the complexes (By similarity).</text>
</comment>
<comment type="catalytic activity">
    <reaction>
        <text>N(6)-[(R)-dihydrolipoyl]-L-lysyl-[protein] + NAD(+) = N(6)-[(R)-lipoyl]-L-lysyl-[protein] + NADH + H(+)</text>
        <dbReference type="Rhea" id="RHEA:15045"/>
        <dbReference type="Rhea" id="RHEA-COMP:10474"/>
        <dbReference type="Rhea" id="RHEA-COMP:10475"/>
        <dbReference type="ChEBI" id="CHEBI:15378"/>
        <dbReference type="ChEBI" id="CHEBI:57540"/>
        <dbReference type="ChEBI" id="CHEBI:57945"/>
        <dbReference type="ChEBI" id="CHEBI:83099"/>
        <dbReference type="ChEBI" id="CHEBI:83100"/>
        <dbReference type="EC" id="1.8.1.4"/>
    </reaction>
</comment>
<comment type="cofactor">
    <cofactor evidence="1">
        <name>FAD</name>
        <dbReference type="ChEBI" id="CHEBI:57692"/>
    </cofactor>
    <text evidence="1">Binds 1 FAD per subunit.</text>
</comment>
<comment type="subunit">
    <text evidence="1">Homodimer. Part of the PDH complex, consisting of multiple copies of AceE (E1), DlaT (E2) and Lpd (E3), and of the BCKADH complex, consisting of multiple copies of BkdA/BkdB (E1), BkdC (E2) and Lpd (E3).</text>
</comment>
<comment type="subcellular location">
    <subcellularLocation>
        <location evidence="2">Cytoplasm</location>
    </subcellularLocation>
</comment>
<comment type="miscellaneous">
    <text>The active site is a redox-active disulfide bond.</text>
</comment>
<comment type="similarity">
    <text evidence="2">Belongs to the class-I pyridine nucleotide-disulfide oxidoreductase family.</text>
</comment>
<feature type="chain" id="PRO_0000068033" description="Dihydrolipoyl dehydrogenase">
    <location>
        <begin position="1"/>
        <end position="467"/>
    </location>
</feature>
<feature type="active site" description="Proton acceptor" evidence="1">
    <location>
        <position position="446"/>
    </location>
</feature>
<feature type="binding site" evidence="1">
    <location>
        <begin position="33"/>
        <end position="41"/>
    </location>
    <ligand>
        <name>FAD</name>
        <dbReference type="ChEBI" id="CHEBI:57692"/>
    </ligand>
</feature>
<feature type="binding site" evidence="1">
    <location>
        <position position="50"/>
    </location>
    <ligand>
        <name>FAD</name>
        <dbReference type="ChEBI" id="CHEBI:57692"/>
    </ligand>
</feature>
<feature type="binding site" evidence="1">
    <location>
        <position position="113"/>
    </location>
    <ligand>
        <name>FAD</name>
        <dbReference type="ChEBI" id="CHEBI:57692"/>
    </ligand>
</feature>
<feature type="binding site" evidence="1">
    <location>
        <begin position="181"/>
        <end position="185"/>
    </location>
    <ligand>
        <name>NAD(+)</name>
        <dbReference type="ChEBI" id="CHEBI:57540"/>
    </ligand>
</feature>
<feature type="binding site" evidence="1">
    <location>
        <position position="204"/>
    </location>
    <ligand>
        <name>NAD(+)</name>
        <dbReference type="ChEBI" id="CHEBI:57540"/>
    </ligand>
</feature>
<feature type="binding site" evidence="1">
    <location>
        <begin position="269"/>
        <end position="272"/>
    </location>
    <ligand>
        <name>NAD(+)</name>
        <dbReference type="ChEBI" id="CHEBI:57540"/>
    </ligand>
</feature>
<feature type="binding site" evidence="1">
    <location>
        <position position="312"/>
    </location>
    <ligand>
        <name>FAD</name>
        <dbReference type="ChEBI" id="CHEBI:57692"/>
    </ligand>
</feature>
<feature type="binding site" evidence="1">
    <location>
        <position position="320"/>
    </location>
    <ligand>
        <name>FAD</name>
        <dbReference type="ChEBI" id="CHEBI:57692"/>
    </ligand>
</feature>
<feature type="disulfide bond" description="Redox-active" evidence="1">
    <location>
        <begin position="41"/>
        <end position="46"/>
    </location>
</feature>